<protein>
    <recommendedName>
        <fullName>Uncharacterized protein YMR315W-A</fullName>
    </recommendedName>
</protein>
<organism>
    <name type="scientific">Saccharomyces cerevisiae (strain ATCC 204508 / S288c)</name>
    <name type="common">Baker's yeast</name>
    <dbReference type="NCBI Taxonomy" id="559292"/>
    <lineage>
        <taxon>Eukaryota</taxon>
        <taxon>Fungi</taxon>
        <taxon>Dikarya</taxon>
        <taxon>Ascomycota</taxon>
        <taxon>Saccharomycotina</taxon>
        <taxon>Saccharomycetes</taxon>
        <taxon>Saccharomycetales</taxon>
        <taxon>Saccharomycetaceae</taxon>
        <taxon>Saccharomyces</taxon>
    </lineage>
</organism>
<name>YM315_YEAST</name>
<feature type="signal peptide" evidence="1">
    <location>
        <begin position="1"/>
        <end position="25"/>
    </location>
</feature>
<feature type="chain" id="PRO_0000247796" description="Uncharacterized protein YMR315W-A">
    <location>
        <begin position="26"/>
        <end position="35"/>
    </location>
</feature>
<sequence length="35" mass="4054">MTERKLLQLLRRPFISLSLFTALRACPLRPKSLIA</sequence>
<proteinExistence type="inferred from homology"/>
<accession>Q8TGS4</accession>
<accession>D6W0E3</accession>
<gene>
    <name type="ordered locus">YMR315W-A</name>
</gene>
<reference key="1">
    <citation type="journal article" date="1997" name="Nature">
        <title>The nucleotide sequence of Saccharomyces cerevisiae chromosome XIII.</title>
        <authorList>
            <person name="Bowman S."/>
            <person name="Churcher C.M."/>
            <person name="Badcock K."/>
            <person name="Brown D."/>
            <person name="Chillingworth T."/>
            <person name="Connor R."/>
            <person name="Dedman K."/>
            <person name="Devlin K."/>
            <person name="Gentles S."/>
            <person name="Hamlin N."/>
            <person name="Hunt S."/>
            <person name="Jagels K."/>
            <person name="Lye G."/>
            <person name="Moule S."/>
            <person name="Odell C."/>
            <person name="Pearson D."/>
            <person name="Rajandream M.A."/>
            <person name="Rice P."/>
            <person name="Skelton J."/>
            <person name="Walsh S.V."/>
            <person name="Whitehead S."/>
            <person name="Barrell B.G."/>
        </authorList>
    </citation>
    <scope>NUCLEOTIDE SEQUENCE [LARGE SCALE GENOMIC DNA]</scope>
    <source>
        <strain>ATCC 204508 / S288c</strain>
    </source>
</reference>
<reference key="2">
    <citation type="journal article" date="2014" name="G3 (Bethesda)">
        <title>The reference genome sequence of Saccharomyces cerevisiae: Then and now.</title>
        <authorList>
            <person name="Engel S.R."/>
            <person name="Dietrich F.S."/>
            <person name="Fisk D.G."/>
            <person name="Binkley G."/>
            <person name="Balakrishnan R."/>
            <person name="Costanzo M.C."/>
            <person name="Dwight S.S."/>
            <person name="Hitz B.C."/>
            <person name="Karra K."/>
            <person name="Nash R.S."/>
            <person name="Weng S."/>
            <person name="Wong E.D."/>
            <person name="Lloyd P."/>
            <person name="Skrzypek M.S."/>
            <person name="Miyasato S.R."/>
            <person name="Simison M."/>
            <person name="Cherry J.M."/>
        </authorList>
    </citation>
    <scope>GENOME REANNOTATION</scope>
    <source>
        <strain>ATCC 204508 / S288c</strain>
    </source>
</reference>
<reference key="3">
    <citation type="journal article" date="2002" name="Nat. Biotechnol.">
        <title>An integrated approach for finding overlooked genes in yeast.</title>
        <authorList>
            <person name="Kumar A."/>
            <person name="Harrison P.M."/>
            <person name="Cheung K.-H."/>
            <person name="Lan N."/>
            <person name="Echols N."/>
            <person name="Bertone P."/>
            <person name="Miller P."/>
            <person name="Gerstein M.B."/>
            <person name="Snyder M."/>
        </authorList>
    </citation>
    <scope>NUCLEOTIDE SEQUENCE [GENOMIC DNA]</scope>
</reference>
<evidence type="ECO:0000255" key="1"/>
<dbReference type="EMBL" id="Z54141">
    <property type="status" value="NOT_ANNOTATED_CDS"/>
    <property type="molecule type" value="Genomic_DNA"/>
</dbReference>
<dbReference type="EMBL" id="AF479911">
    <property type="protein sequence ID" value="AAL79224.1"/>
    <property type="molecule type" value="Genomic_DNA"/>
</dbReference>
<dbReference type="EMBL" id="BK006946">
    <property type="protein sequence ID" value="DAA10217.1"/>
    <property type="molecule type" value="Genomic_DNA"/>
</dbReference>
<dbReference type="RefSeq" id="NP_878150.1">
    <property type="nucleotide sequence ID" value="NM_001184618.1"/>
</dbReference>
<dbReference type="BioGRID" id="37050">
    <property type="interactions" value="12"/>
</dbReference>
<dbReference type="FunCoup" id="Q8TGS4">
    <property type="interactions" value="5"/>
</dbReference>
<dbReference type="STRING" id="4932.YMR315W-A"/>
<dbReference type="PaxDb" id="4932-YMR315W-A"/>
<dbReference type="PeptideAtlas" id="Q8TGS4"/>
<dbReference type="EnsemblFungi" id="YMR315W-A_mRNA">
    <property type="protein sequence ID" value="YMR315W-A"/>
    <property type="gene ID" value="YMR315W-A"/>
</dbReference>
<dbReference type="GeneID" id="1466508"/>
<dbReference type="KEGG" id="sce:YMR315W-A"/>
<dbReference type="AGR" id="SGD:S000028697"/>
<dbReference type="SGD" id="S000028697">
    <property type="gene designation" value="YMR315W-A"/>
</dbReference>
<dbReference type="VEuPathDB" id="FungiDB:YMR315W-A"/>
<dbReference type="HOGENOM" id="CLU_3368808_0_0_1"/>
<dbReference type="InParanoid" id="Q8TGS4"/>
<dbReference type="BioCyc" id="YEAST:G3O-33035-MONOMER"/>
<dbReference type="BioGRID-ORCS" id="1466508">
    <property type="hits" value="0 hits in 10 CRISPR screens"/>
</dbReference>
<dbReference type="PRO" id="PR:Q8TGS4"/>
<dbReference type="Proteomes" id="UP000002311">
    <property type="component" value="Chromosome XIII"/>
</dbReference>
<keyword id="KW-1185">Reference proteome</keyword>
<keyword id="KW-0732">Signal</keyword>